<feature type="signal peptide" evidence="1">
    <location>
        <begin position="1"/>
        <end position="30"/>
    </location>
</feature>
<feature type="chain" id="PRO_1000149684" description="Periplasmic trehalase">
    <location>
        <begin position="31"/>
        <end position="565"/>
    </location>
</feature>
<feature type="region of interest" description="Disordered" evidence="2">
    <location>
        <begin position="538"/>
        <end position="565"/>
    </location>
</feature>
<feature type="compositionally biased region" description="Polar residues" evidence="2">
    <location>
        <begin position="548"/>
        <end position="565"/>
    </location>
</feature>
<feature type="active site" description="Proton donor/acceptor" evidence="1">
    <location>
        <position position="312"/>
    </location>
</feature>
<feature type="active site" description="Proton donor/acceptor" evidence="1">
    <location>
        <position position="496"/>
    </location>
</feature>
<feature type="binding site" evidence="1">
    <location>
        <position position="152"/>
    </location>
    <ligand>
        <name>substrate</name>
    </ligand>
</feature>
<feature type="binding site" evidence="1">
    <location>
        <begin position="159"/>
        <end position="160"/>
    </location>
    <ligand>
        <name>substrate</name>
    </ligand>
</feature>
<feature type="binding site" evidence="1">
    <location>
        <position position="196"/>
    </location>
    <ligand>
        <name>substrate</name>
    </ligand>
</feature>
<feature type="binding site" evidence="1">
    <location>
        <begin position="205"/>
        <end position="207"/>
    </location>
    <ligand>
        <name>substrate</name>
    </ligand>
</feature>
<feature type="binding site" evidence="1">
    <location>
        <begin position="277"/>
        <end position="279"/>
    </location>
    <ligand>
        <name>substrate</name>
    </ligand>
</feature>
<feature type="binding site" evidence="1">
    <location>
        <position position="310"/>
    </location>
    <ligand>
        <name>substrate</name>
    </ligand>
</feature>
<feature type="binding site" evidence="1">
    <location>
        <position position="511"/>
    </location>
    <ligand>
        <name>substrate</name>
    </ligand>
</feature>
<comment type="function">
    <text evidence="1">Provides the cells with the ability to utilize trehalose at high osmolarity by splitting it into glucose molecules that can subsequently be taken up by the phosphotransferase-mediated uptake system.</text>
</comment>
<comment type="catalytic activity">
    <reaction evidence="1">
        <text>alpha,alpha-trehalose + H2O = alpha-D-glucose + beta-D-glucose</text>
        <dbReference type="Rhea" id="RHEA:32675"/>
        <dbReference type="ChEBI" id="CHEBI:15377"/>
        <dbReference type="ChEBI" id="CHEBI:15903"/>
        <dbReference type="ChEBI" id="CHEBI:16551"/>
        <dbReference type="ChEBI" id="CHEBI:17925"/>
        <dbReference type="EC" id="3.2.1.28"/>
    </reaction>
</comment>
<comment type="subunit">
    <text evidence="1">Monomer.</text>
</comment>
<comment type="subcellular location">
    <subcellularLocation>
        <location evidence="1">Periplasm</location>
    </subcellularLocation>
</comment>
<comment type="similarity">
    <text evidence="1">Belongs to the glycosyl hydrolase 37 family.</text>
</comment>
<reference key="1">
    <citation type="journal article" date="2009" name="PLoS Genet.">
        <title>Organised genome dynamics in the Escherichia coli species results in highly diverse adaptive paths.</title>
        <authorList>
            <person name="Touchon M."/>
            <person name="Hoede C."/>
            <person name="Tenaillon O."/>
            <person name="Barbe V."/>
            <person name="Baeriswyl S."/>
            <person name="Bidet P."/>
            <person name="Bingen E."/>
            <person name="Bonacorsi S."/>
            <person name="Bouchier C."/>
            <person name="Bouvet O."/>
            <person name="Calteau A."/>
            <person name="Chiapello H."/>
            <person name="Clermont O."/>
            <person name="Cruveiller S."/>
            <person name="Danchin A."/>
            <person name="Diard M."/>
            <person name="Dossat C."/>
            <person name="Karoui M.E."/>
            <person name="Frapy E."/>
            <person name="Garry L."/>
            <person name="Ghigo J.M."/>
            <person name="Gilles A.M."/>
            <person name="Johnson J."/>
            <person name="Le Bouguenec C."/>
            <person name="Lescat M."/>
            <person name="Mangenot S."/>
            <person name="Martinez-Jehanne V."/>
            <person name="Matic I."/>
            <person name="Nassif X."/>
            <person name="Oztas S."/>
            <person name="Petit M.A."/>
            <person name="Pichon C."/>
            <person name="Rouy Z."/>
            <person name="Ruf C.S."/>
            <person name="Schneider D."/>
            <person name="Tourret J."/>
            <person name="Vacherie B."/>
            <person name="Vallenet D."/>
            <person name="Medigue C."/>
            <person name="Rocha E.P.C."/>
            <person name="Denamur E."/>
        </authorList>
    </citation>
    <scope>NUCLEOTIDE SEQUENCE [LARGE SCALE GENOMIC DNA]</scope>
    <source>
        <strain>55989 / EAEC</strain>
    </source>
</reference>
<accession>B7LGV7</accession>
<protein>
    <recommendedName>
        <fullName evidence="1">Periplasmic trehalase</fullName>
        <ecNumber evidence="1">3.2.1.28</ecNumber>
    </recommendedName>
    <alternativeName>
        <fullName evidence="1">Alpha,alpha-trehalase</fullName>
    </alternativeName>
    <alternativeName>
        <fullName evidence="1">Alpha,alpha-trehalose glucohydrolase</fullName>
    </alternativeName>
</protein>
<dbReference type="EC" id="3.2.1.28" evidence="1"/>
<dbReference type="EMBL" id="CU928145">
    <property type="protein sequence ID" value="CAU97151.1"/>
    <property type="molecule type" value="Genomic_DNA"/>
</dbReference>
<dbReference type="RefSeq" id="WP_000841700.1">
    <property type="nucleotide sequence ID" value="NC_011748.1"/>
</dbReference>
<dbReference type="SMR" id="B7LGV7"/>
<dbReference type="CAZy" id="GH37">
    <property type="family name" value="Glycoside Hydrolase Family 37"/>
</dbReference>
<dbReference type="KEGG" id="eck:EC55989_1293"/>
<dbReference type="HOGENOM" id="CLU_006451_3_1_6"/>
<dbReference type="Proteomes" id="UP000000746">
    <property type="component" value="Chromosome"/>
</dbReference>
<dbReference type="GO" id="GO:0042597">
    <property type="term" value="C:periplasmic space"/>
    <property type="evidence" value="ECO:0007669"/>
    <property type="project" value="UniProtKB-SubCell"/>
</dbReference>
<dbReference type="GO" id="GO:0004555">
    <property type="term" value="F:alpha,alpha-trehalase activity"/>
    <property type="evidence" value="ECO:0007669"/>
    <property type="project" value="UniProtKB-UniRule"/>
</dbReference>
<dbReference type="GO" id="GO:0071474">
    <property type="term" value="P:cellular hyperosmotic response"/>
    <property type="evidence" value="ECO:0007669"/>
    <property type="project" value="InterPro"/>
</dbReference>
<dbReference type="GO" id="GO:0005993">
    <property type="term" value="P:trehalose catabolic process"/>
    <property type="evidence" value="ECO:0007669"/>
    <property type="project" value="InterPro"/>
</dbReference>
<dbReference type="FunFam" id="1.50.10.10:FF:000003">
    <property type="entry name" value="Cytoplasmic trehalase"/>
    <property type="match status" value="1"/>
</dbReference>
<dbReference type="Gene3D" id="1.50.10.10">
    <property type="match status" value="1"/>
</dbReference>
<dbReference type="HAMAP" id="MF_01060">
    <property type="entry name" value="Peripl_trehalase"/>
    <property type="match status" value="1"/>
</dbReference>
<dbReference type="InterPro" id="IPR008928">
    <property type="entry name" value="6-hairpin_glycosidase_sf"/>
</dbReference>
<dbReference type="InterPro" id="IPR012341">
    <property type="entry name" value="6hp_glycosidase-like_sf"/>
</dbReference>
<dbReference type="InterPro" id="IPR001661">
    <property type="entry name" value="Glyco_hydro_37"/>
</dbReference>
<dbReference type="InterPro" id="IPR018232">
    <property type="entry name" value="Glyco_hydro_37_CS"/>
</dbReference>
<dbReference type="InterPro" id="IPR023720">
    <property type="entry name" value="Trehalase_periplasmic"/>
</dbReference>
<dbReference type="NCBIfam" id="NF009773">
    <property type="entry name" value="PRK13270.1"/>
    <property type="match status" value="1"/>
</dbReference>
<dbReference type="NCBIfam" id="NF009774">
    <property type="entry name" value="PRK13271.1"/>
    <property type="match status" value="1"/>
</dbReference>
<dbReference type="PANTHER" id="PTHR23403">
    <property type="entry name" value="TREHALASE"/>
    <property type="match status" value="1"/>
</dbReference>
<dbReference type="PANTHER" id="PTHR23403:SF1">
    <property type="entry name" value="TREHALASE"/>
    <property type="match status" value="1"/>
</dbReference>
<dbReference type="Pfam" id="PF01204">
    <property type="entry name" value="Trehalase"/>
    <property type="match status" value="1"/>
</dbReference>
<dbReference type="PRINTS" id="PR00744">
    <property type="entry name" value="GLHYDRLASE37"/>
</dbReference>
<dbReference type="SUPFAM" id="SSF48208">
    <property type="entry name" value="Six-hairpin glycosidases"/>
    <property type="match status" value="1"/>
</dbReference>
<dbReference type="PROSITE" id="PS00927">
    <property type="entry name" value="TREHALASE_1"/>
    <property type="match status" value="1"/>
</dbReference>
<dbReference type="PROSITE" id="PS00928">
    <property type="entry name" value="TREHALASE_2"/>
    <property type="match status" value="1"/>
</dbReference>
<organism>
    <name type="scientific">Escherichia coli (strain 55989 / EAEC)</name>
    <dbReference type="NCBI Taxonomy" id="585055"/>
    <lineage>
        <taxon>Bacteria</taxon>
        <taxon>Pseudomonadati</taxon>
        <taxon>Pseudomonadota</taxon>
        <taxon>Gammaproteobacteria</taxon>
        <taxon>Enterobacterales</taxon>
        <taxon>Enterobacteriaceae</taxon>
        <taxon>Escherichia</taxon>
    </lineage>
</organism>
<sequence length="565" mass="63669">MKSPAPSRPQKMALIPACIFLCFAALSVQAEETPVTPQPPDILLGPLFNDVQNAKLFPDQKTFADAMPNSDPLMILADYRMQQNQSGFDLRHFVNVNFTLPKEGEKYVPPEGQSLREHIDGLWPVLTRSTENTEKWDSLLPLPEPYVVPGGRFREVYYWDSYFTMLGLAESGHWDKVADMVANFAHEIDTYGHIPNGNRSYYLSRSQPPFFALMVELLAQHEGDAALKQYLPQMQKEYAYWMDGVENLQAGQQEKRVVKLQDGTLLNRYWDDRDTPRPESWVEDIATAKSNPNRPATEIYRDLRSAAASGWDFSSRWMDNPQQLNTLRTTSIVPVDLNSLMFKMEKILARASKAAGDNAMANQYETLANARQKGIEKYLWNDQQGWYADYDLKSHKVRNQLTAAALFPLYVNAAAKDRANKMATATKTHLLQPGGLNTTSVKSGQQWDAPNGWAPLQWVATEGLQNYGQKEVAMDISWHFLTNVQHTYDREKKLVEKYDVSTTGTGGGGGEYPLQDGFGWTNGVTLKMLDLICPKEQPCDNVPATRPTVKSATTQPSTKEAQPTP</sequence>
<proteinExistence type="inferred from homology"/>
<name>TREA_ECO55</name>
<gene>
    <name evidence="1" type="primary">treA</name>
    <name type="ordered locus">EC55989_1293</name>
</gene>
<keyword id="KW-0326">Glycosidase</keyword>
<keyword id="KW-0378">Hydrolase</keyword>
<keyword id="KW-0574">Periplasm</keyword>
<keyword id="KW-1185">Reference proteome</keyword>
<keyword id="KW-0732">Signal</keyword>
<evidence type="ECO:0000255" key="1">
    <source>
        <dbReference type="HAMAP-Rule" id="MF_01060"/>
    </source>
</evidence>
<evidence type="ECO:0000256" key="2">
    <source>
        <dbReference type="SAM" id="MobiDB-lite"/>
    </source>
</evidence>